<dbReference type="EC" id="6.3.2.-" evidence="1"/>
<dbReference type="EMBL" id="CP000947">
    <property type="protein sequence ID" value="ACA32682.1"/>
    <property type="molecule type" value="Genomic_DNA"/>
</dbReference>
<dbReference type="RefSeq" id="WP_012341793.1">
    <property type="nucleotide sequence ID" value="NC_010519.1"/>
</dbReference>
<dbReference type="SMR" id="B0UT76"/>
<dbReference type="STRING" id="228400.HSM_0995"/>
<dbReference type="GeneID" id="31487293"/>
<dbReference type="KEGG" id="hsm:HSM_0995"/>
<dbReference type="HOGENOM" id="CLU_054353_0_1_6"/>
<dbReference type="GO" id="GO:0005737">
    <property type="term" value="C:cytoplasm"/>
    <property type="evidence" value="ECO:0007669"/>
    <property type="project" value="TreeGrafter"/>
</dbReference>
<dbReference type="GO" id="GO:0005524">
    <property type="term" value="F:ATP binding"/>
    <property type="evidence" value="ECO:0007669"/>
    <property type="project" value="UniProtKB-UniRule"/>
</dbReference>
<dbReference type="GO" id="GO:0046872">
    <property type="term" value="F:metal ion binding"/>
    <property type="evidence" value="ECO:0007669"/>
    <property type="project" value="UniProtKB-KW"/>
</dbReference>
<dbReference type="GO" id="GO:0018169">
    <property type="term" value="F:ribosomal S6-glutamic acid ligase activity"/>
    <property type="evidence" value="ECO:0007669"/>
    <property type="project" value="TreeGrafter"/>
</dbReference>
<dbReference type="GO" id="GO:0036211">
    <property type="term" value="P:protein modification process"/>
    <property type="evidence" value="ECO:0007669"/>
    <property type="project" value="InterPro"/>
</dbReference>
<dbReference type="GO" id="GO:0009432">
    <property type="term" value="P:SOS response"/>
    <property type="evidence" value="ECO:0007669"/>
    <property type="project" value="TreeGrafter"/>
</dbReference>
<dbReference type="GO" id="GO:0006412">
    <property type="term" value="P:translation"/>
    <property type="evidence" value="ECO:0007669"/>
    <property type="project" value="UniProtKB-KW"/>
</dbReference>
<dbReference type="FunFam" id="3.30.470.20:FF:000058">
    <property type="entry name" value="Alpha-aminoadipate--LysW ligase LysX protein"/>
    <property type="match status" value="1"/>
</dbReference>
<dbReference type="Gene3D" id="3.40.50.20">
    <property type="match status" value="1"/>
</dbReference>
<dbReference type="Gene3D" id="3.30.1490.20">
    <property type="entry name" value="ATP-grasp fold, A domain"/>
    <property type="match status" value="1"/>
</dbReference>
<dbReference type="Gene3D" id="3.30.470.20">
    <property type="entry name" value="ATP-grasp fold, B domain"/>
    <property type="match status" value="1"/>
</dbReference>
<dbReference type="HAMAP" id="MF_01552">
    <property type="entry name" value="RimK"/>
    <property type="match status" value="1"/>
</dbReference>
<dbReference type="InterPro" id="IPR011761">
    <property type="entry name" value="ATP-grasp"/>
</dbReference>
<dbReference type="InterPro" id="IPR013651">
    <property type="entry name" value="ATP-grasp_RimK-type"/>
</dbReference>
<dbReference type="InterPro" id="IPR013815">
    <property type="entry name" value="ATP_grasp_subdomain_1"/>
</dbReference>
<dbReference type="InterPro" id="IPR023533">
    <property type="entry name" value="RimK"/>
</dbReference>
<dbReference type="InterPro" id="IPR041107">
    <property type="entry name" value="Rimk_N"/>
</dbReference>
<dbReference type="InterPro" id="IPR004666">
    <property type="entry name" value="Rp_bS6_RimK/Lys_biosynth_LsyX"/>
</dbReference>
<dbReference type="NCBIfam" id="TIGR00768">
    <property type="entry name" value="rimK_fam"/>
    <property type="match status" value="1"/>
</dbReference>
<dbReference type="PANTHER" id="PTHR21621:SF7">
    <property type="entry name" value="RIBOSOMAL PROTEIN BS6--L-GLUTAMATE LIGASE"/>
    <property type="match status" value="1"/>
</dbReference>
<dbReference type="PANTHER" id="PTHR21621">
    <property type="entry name" value="RIBOSOMAL PROTEIN S6 MODIFICATION PROTEIN"/>
    <property type="match status" value="1"/>
</dbReference>
<dbReference type="Pfam" id="PF08443">
    <property type="entry name" value="RimK"/>
    <property type="match status" value="1"/>
</dbReference>
<dbReference type="Pfam" id="PF18030">
    <property type="entry name" value="Rimk_N"/>
    <property type="match status" value="1"/>
</dbReference>
<dbReference type="SUPFAM" id="SSF56059">
    <property type="entry name" value="Glutathione synthetase ATP-binding domain-like"/>
    <property type="match status" value="1"/>
</dbReference>
<dbReference type="PROSITE" id="PS50975">
    <property type="entry name" value="ATP_GRASP"/>
    <property type="match status" value="1"/>
</dbReference>
<sequence>MKLLMLCREPRLYSCQRLKESAEDNGHQIDILDPNRCLLKLSKNAPHFELYYQVNSKSEPYLLPDYDAIIPRFGSTSTRMGCAVLRHFRTKNVFCLNDDVAFLKARDKWLSLQLLTEQGIAVPNSALSGAEFSATQAILQIQSPTILKTLHGSQGIGVILAENRKSAVSIMETLTQADVPLLMQDFIQEAQGTDIRCFVIGDKVVATMQRIGQEDEFRANFHRGGSAEKIQLTEQEKVLALKATKCLGLDVAGVDLIRSKQGLLVLEVNASPGLEMIEKTSGIDIALQMIVHIEKQFKR</sequence>
<feature type="chain" id="PRO_1000087746" description="Probable alpha-L-glutamate ligase">
    <location>
        <begin position="1"/>
        <end position="299"/>
    </location>
</feature>
<feature type="domain" description="ATP-grasp" evidence="1">
    <location>
        <begin position="112"/>
        <end position="294"/>
    </location>
</feature>
<feature type="binding site" evidence="1">
    <location>
        <position position="148"/>
    </location>
    <ligand>
        <name>ATP</name>
        <dbReference type="ChEBI" id="CHEBI:30616"/>
    </ligand>
</feature>
<feature type="binding site" evidence="1">
    <location>
        <begin position="185"/>
        <end position="186"/>
    </location>
    <ligand>
        <name>ATP</name>
        <dbReference type="ChEBI" id="CHEBI:30616"/>
    </ligand>
</feature>
<feature type="binding site" evidence="1">
    <location>
        <position position="194"/>
    </location>
    <ligand>
        <name>ATP</name>
        <dbReference type="ChEBI" id="CHEBI:30616"/>
    </ligand>
</feature>
<feature type="binding site" evidence="1">
    <location>
        <begin position="218"/>
        <end position="220"/>
    </location>
    <ligand>
        <name>ATP</name>
        <dbReference type="ChEBI" id="CHEBI:30616"/>
    </ligand>
</feature>
<feature type="binding site" evidence="1">
    <location>
        <position position="255"/>
    </location>
    <ligand>
        <name>Mg(2+)</name>
        <dbReference type="ChEBI" id="CHEBI:18420"/>
        <label>1</label>
    </ligand>
</feature>
<feature type="binding site" evidence="1">
    <location>
        <position position="255"/>
    </location>
    <ligand>
        <name>Mn(2+)</name>
        <dbReference type="ChEBI" id="CHEBI:29035"/>
        <label>1</label>
    </ligand>
</feature>
<feature type="binding site" evidence="1">
    <location>
        <position position="267"/>
    </location>
    <ligand>
        <name>Mg(2+)</name>
        <dbReference type="ChEBI" id="CHEBI:18420"/>
        <label>1</label>
    </ligand>
</feature>
<feature type="binding site" evidence="1">
    <location>
        <position position="267"/>
    </location>
    <ligand>
        <name>Mg(2+)</name>
        <dbReference type="ChEBI" id="CHEBI:18420"/>
        <label>2</label>
    </ligand>
</feature>
<feature type="binding site" evidence="1">
    <location>
        <position position="267"/>
    </location>
    <ligand>
        <name>Mn(2+)</name>
        <dbReference type="ChEBI" id="CHEBI:29035"/>
        <label>1</label>
    </ligand>
</feature>
<feature type="binding site" evidence="1">
    <location>
        <position position="267"/>
    </location>
    <ligand>
        <name>Mn(2+)</name>
        <dbReference type="ChEBI" id="CHEBI:29035"/>
        <label>2</label>
    </ligand>
</feature>
<feature type="binding site" evidence="1">
    <location>
        <position position="269"/>
    </location>
    <ligand>
        <name>Mg(2+)</name>
        <dbReference type="ChEBI" id="CHEBI:18420"/>
        <label>2</label>
    </ligand>
</feature>
<feature type="binding site" evidence="1">
    <location>
        <position position="269"/>
    </location>
    <ligand>
        <name>Mn(2+)</name>
        <dbReference type="ChEBI" id="CHEBI:29035"/>
        <label>2</label>
    </ligand>
</feature>
<gene>
    <name evidence="1" type="primary">rimK</name>
    <name type="ordered locus">HSM_0995</name>
</gene>
<organism>
    <name type="scientific">Histophilus somni (strain 2336)</name>
    <name type="common">Haemophilus somnus</name>
    <dbReference type="NCBI Taxonomy" id="228400"/>
    <lineage>
        <taxon>Bacteria</taxon>
        <taxon>Pseudomonadati</taxon>
        <taxon>Pseudomonadota</taxon>
        <taxon>Gammaproteobacteria</taxon>
        <taxon>Pasteurellales</taxon>
        <taxon>Pasteurellaceae</taxon>
        <taxon>Histophilus</taxon>
    </lineage>
</organism>
<comment type="cofactor">
    <cofactor evidence="1">
        <name>Mg(2+)</name>
        <dbReference type="ChEBI" id="CHEBI:18420"/>
    </cofactor>
    <cofactor evidence="1">
        <name>Mn(2+)</name>
        <dbReference type="ChEBI" id="CHEBI:29035"/>
    </cofactor>
    <text evidence="1">Binds 2 magnesium or manganese ions per subunit.</text>
</comment>
<comment type="similarity">
    <text evidence="1">Belongs to the RimK family.</text>
</comment>
<accession>B0UT76</accession>
<keyword id="KW-0067">ATP-binding</keyword>
<keyword id="KW-0436">Ligase</keyword>
<keyword id="KW-0460">Magnesium</keyword>
<keyword id="KW-0464">Manganese</keyword>
<keyword id="KW-0479">Metal-binding</keyword>
<keyword id="KW-0547">Nucleotide-binding</keyword>
<keyword id="KW-0648">Protein biosynthesis</keyword>
<evidence type="ECO:0000255" key="1">
    <source>
        <dbReference type="HAMAP-Rule" id="MF_01552"/>
    </source>
</evidence>
<protein>
    <recommendedName>
        <fullName evidence="1">Probable alpha-L-glutamate ligase</fullName>
        <ecNumber evidence="1">6.3.2.-</ecNumber>
    </recommendedName>
</protein>
<name>RIMK_HISS2</name>
<proteinExistence type="inferred from homology"/>
<reference key="1">
    <citation type="submission" date="2008-02" db="EMBL/GenBank/DDBJ databases">
        <title>Complete sequence of Haemophilus somnus 2336.</title>
        <authorList>
            <consortium name="US DOE Joint Genome Institute"/>
            <person name="Siddaramappa S."/>
            <person name="Duncan A.J."/>
            <person name="Challacombe J.F."/>
            <person name="Rainey D."/>
            <person name="Gillaspy A.F."/>
            <person name="Carson M."/>
            <person name="Gipson J."/>
            <person name="Gipson M."/>
            <person name="Bruce D."/>
            <person name="Detter J.C."/>
            <person name="Han C.S."/>
            <person name="Land M."/>
            <person name="Tapia R."/>
            <person name="Thompson L.S."/>
            <person name="Orvis J."/>
            <person name="Zaitshik J."/>
            <person name="Barnes G."/>
            <person name="Brettin T.S."/>
            <person name="Dyer D.W."/>
            <person name="Inzana T.J."/>
        </authorList>
    </citation>
    <scope>NUCLEOTIDE SEQUENCE [LARGE SCALE GENOMIC DNA]</scope>
    <source>
        <strain>2336</strain>
    </source>
</reference>